<dbReference type="EC" id="5.6.1.7" evidence="1"/>
<dbReference type="EMBL" id="AE000657">
    <property type="protein sequence ID" value="AAC07897.1"/>
    <property type="molecule type" value="Genomic_DNA"/>
</dbReference>
<dbReference type="PIR" id="C70489">
    <property type="entry name" value="C70489"/>
</dbReference>
<dbReference type="RefSeq" id="NP_214512.1">
    <property type="nucleotide sequence ID" value="NC_000918.1"/>
</dbReference>
<dbReference type="RefSeq" id="WP_010881448.1">
    <property type="nucleotide sequence ID" value="NC_000918.1"/>
</dbReference>
<dbReference type="SMR" id="O67943"/>
<dbReference type="FunCoup" id="O67943">
    <property type="interactions" value="536"/>
</dbReference>
<dbReference type="STRING" id="224324.aq_2200"/>
<dbReference type="EnsemblBacteria" id="AAC07897">
    <property type="protein sequence ID" value="AAC07897"/>
    <property type="gene ID" value="aq_2200"/>
</dbReference>
<dbReference type="KEGG" id="aae:aq_2200"/>
<dbReference type="PATRIC" id="fig|224324.8.peg.1703"/>
<dbReference type="eggNOG" id="COG0459">
    <property type="taxonomic scope" value="Bacteria"/>
</dbReference>
<dbReference type="HOGENOM" id="CLU_016503_3_0_0"/>
<dbReference type="InParanoid" id="O67943"/>
<dbReference type="OrthoDB" id="9766614at2"/>
<dbReference type="Proteomes" id="UP000000798">
    <property type="component" value="Chromosome"/>
</dbReference>
<dbReference type="GO" id="GO:1990220">
    <property type="term" value="C:GroEL-GroES complex"/>
    <property type="evidence" value="ECO:0000318"/>
    <property type="project" value="GO_Central"/>
</dbReference>
<dbReference type="GO" id="GO:0005524">
    <property type="term" value="F:ATP binding"/>
    <property type="evidence" value="ECO:0000318"/>
    <property type="project" value="GO_Central"/>
</dbReference>
<dbReference type="GO" id="GO:0140662">
    <property type="term" value="F:ATP-dependent protein folding chaperone"/>
    <property type="evidence" value="ECO:0007669"/>
    <property type="project" value="InterPro"/>
</dbReference>
<dbReference type="GO" id="GO:0016853">
    <property type="term" value="F:isomerase activity"/>
    <property type="evidence" value="ECO:0007669"/>
    <property type="project" value="UniProtKB-KW"/>
</dbReference>
<dbReference type="GO" id="GO:0051082">
    <property type="term" value="F:unfolded protein binding"/>
    <property type="evidence" value="ECO:0000318"/>
    <property type="project" value="GO_Central"/>
</dbReference>
<dbReference type="GO" id="GO:0051085">
    <property type="term" value="P:chaperone cofactor-dependent protein refolding"/>
    <property type="evidence" value="ECO:0000318"/>
    <property type="project" value="GO_Central"/>
</dbReference>
<dbReference type="GO" id="GO:0042026">
    <property type="term" value="P:protein refolding"/>
    <property type="evidence" value="ECO:0007669"/>
    <property type="project" value="UniProtKB-UniRule"/>
</dbReference>
<dbReference type="GO" id="GO:0009408">
    <property type="term" value="P:response to heat"/>
    <property type="evidence" value="ECO:0000318"/>
    <property type="project" value="GO_Central"/>
</dbReference>
<dbReference type="CDD" id="cd03344">
    <property type="entry name" value="GroEL"/>
    <property type="match status" value="1"/>
</dbReference>
<dbReference type="FunFam" id="3.50.7.10:FF:000001">
    <property type="entry name" value="60 kDa chaperonin"/>
    <property type="match status" value="1"/>
</dbReference>
<dbReference type="Gene3D" id="3.50.7.10">
    <property type="entry name" value="GroEL"/>
    <property type="match status" value="1"/>
</dbReference>
<dbReference type="Gene3D" id="1.10.560.10">
    <property type="entry name" value="GroEL-like equatorial domain"/>
    <property type="match status" value="1"/>
</dbReference>
<dbReference type="Gene3D" id="3.30.260.10">
    <property type="entry name" value="TCP-1-like chaperonin intermediate domain"/>
    <property type="match status" value="1"/>
</dbReference>
<dbReference type="HAMAP" id="MF_00600">
    <property type="entry name" value="CH60"/>
    <property type="match status" value="1"/>
</dbReference>
<dbReference type="InterPro" id="IPR018370">
    <property type="entry name" value="Chaperonin_Cpn60_CS"/>
</dbReference>
<dbReference type="InterPro" id="IPR001844">
    <property type="entry name" value="Cpn60/GroEL"/>
</dbReference>
<dbReference type="InterPro" id="IPR002423">
    <property type="entry name" value="Cpn60/GroEL/TCP-1"/>
</dbReference>
<dbReference type="InterPro" id="IPR027409">
    <property type="entry name" value="GroEL-like_apical_dom_sf"/>
</dbReference>
<dbReference type="InterPro" id="IPR027413">
    <property type="entry name" value="GROEL-like_equatorial_sf"/>
</dbReference>
<dbReference type="InterPro" id="IPR027410">
    <property type="entry name" value="TCP-1-like_intermed_sf"/>
</dbReference>
<dbReference type="NCBIfam" id="TIGR02348">
    <property type="entry name" value="GroEL"/>
    <property type="match status" value="1"/>
</dbReference>
<dbReference type="NCBIfam" id="NF000592">
    <property type="entry name" value="PRK00013.1"/>
    <property type="match status" value="1"/>
</dbReference>
<dbReference type="NCBIfam" id="NF009487">
    <property type="entry name" value="PRK12849.1"/>
    <property type="match status" value="1"/>
</dbReference>
<dbReference type="NCBIfam" id="NF009488">
    <property type="entry name" value="PRK12850.1"/>
    <property type="match status" value="1"/>
</dbReference>
<dbReference type="NCBIfam" id="NF009489">
    <property type="entry name" value="PRK12851.1"/>
    <property type="match status" value="1"/>
</dbReference>
<dbReference type="PANTHER" id="PTHR45633">
    <property type="entry name" value="60 KDA HEAT SHOCK PROTEIN, MITOCHONDRIAL"/>
    <property type="match status" value="1"/>
</dbReference>
<dbReference type="Pfam" id="PF00118">
    <property type="entry name" value="Cpn60_TCP1"/>
    <property type="match status" value="1"/>
</dbReference>
<dbReference type="PRINTS" id="PR00298">
    <property type="entry name" value="CHAPERONIN60"/>
</dbReference>
<dbReference type="SUPFAM" id="SSF52029">
    <property type="entry name" value="GroEL apical domain-like"/>
    <property type="match status" value="1"/>
</dbReference>
<dbReference type="SUPFAM" id="SSF48592">
    <property type="entry name" value="GroEL equatorial domain-like"/>
    <property type="match status" value="2"/>
</dbReference>
<dbReference type="PROSITE" id="PS00296">
    <property type="entry name" value="CHAPERONINS_CPN60"/>
    <property type="match status" value="1"/>
</dbReference>
<sequence length="545" mass="58795">MAAKAIIYNEEARAKLKAGVDKLANAVKVTLGPKGREVILGKNWGTPVVTKDGVTVAKEIELKDKFENIGAQLVKEVASKTADVAGDGTTTATVLAQAIFHEGLRVAASGANVMEVKRGIDKAVKKIVEELKKLSKDVKERKEIEQVATISANNDPEIGKIIADAMEEVGKDGVITVEESKSAETTLEVVKGMQFDRGYLSPYFVTDPEKMECVLENPYILIYEKKITNVKELLPILEQVVRSGRPLLVIAEDVEGEALATLVVNHIKGVLKACAVKAPGFGQRRKDYLGDIAVLTGGQAITEDLGIKLESVTLDMLGQAEKVVVDKEHTTIIGGKGDPEQIKARIEQIKRQIQETTSDYDREKLQERLAKLSGGVAIIRVGAATEAELKEKKYRVEDAVHATKAAVEEGIVPGGGVALVRASEALEDLKGDNHDQQLGIDIIKKAVRTPLKQIAYNAGYDGSVVLEKVIELGKEKGVSWGFNAATGEYVDMYEAGIIDPTKVVRTAIENAASVAGTMLTAEALIADLPEEKKKDITPTDMPELD</sequence>
<gene>
    <name evidence="1" type="primary">groEL</name>
    <name evidence="1" type="synonym">groL</name>
    <name type="ordered locus">aq_2200</name>
</gene>
<comment type="function">
    <text evidence="1">Together with its co-chaperonin GroES, plays an essential role in assisting protein folding. The GroEL-GroES system forms a nano-cage that allows encapsulation of the non-native substrate proteins and provides a physical environment optimized to promote and accelerate protein folding.</text>
</comment>
<comment type="catalytic activity">
    <reaction evidence="1">
        <text>ATP + H2O + a folded polypeptide = ADP + phosphate + an unfolded polypeptide.</text>
        <dbReference type="EC" id="5.6.1.7"/>
    </reaction>
</comment>
<comment type="subunit">
    <text evidence="1">Forms a cylinder of 14 subunits composed of two heptameric rings stacked back-to-back. Interacts with the co-chaperonin GroES.</text>
</comment>
<comment type="subcellular location">
    <subcellularLocation>
        <location evidence="1">Cytoplasm</location>
    </subcellularLocation>
</comment>
<comment type="similarity">
    <text evidence="1">Belongs to the chaperonin (HSP60) family.</text>
</comment>
<organism>
    <name type="scientific">Aquifex aeolicus (strain VF5)</name>
    <dbReference type="NCBI Taxonomy" id="224324"/>
    <lineage>
        <taxon>Bacteria</taxon>
        <taxon>Pseudomonadati</taxon>
        <taxon>Aquificota</taxon>
        <taxon>Aquificia</taxon>
        <taxon>Aquificales</taxon>
        <taxon>Aquificaceae</taxon>
        <taxon>Aquifex</taxon>
    </lineage>
</organism>
<accession>O67943</accession>
<name>CH60_AQUAE</name>
<evidence type="ECO:0000255" key="1">
    <source>
        <dbReference type="HAMAP-Rule" id="MF_00600"/>
    </source>
</evidence>
<keyword id="KW-0067">ATP-binding</keyword>
<keyword id="KW-0143">Chaperone</keyword>
<keyword id="KW-0963">Cytoplasm</keyword>
<keyword id="KW-0413">Isomerase</keyword>
<keyword id="KW-0547">Nucleotide-binding</keyword>
<keyword id="KW-1185">Reference proteome</keyword>
<feature type="chain" id="PRO_0000063264" description="Chaperonin GroEL">
    <location>
        <begin position="1"/>
        <end position="545"/>
    </location>
</feature>
<feature type="binding site" evidence="1">
    <location>
        <begin position="30"/>
        <end position="33"/>
    </location>
    <ligand>
        <name>ATP</name>
        <dbReference type="ChEBI" id="CHEBI:30616"/>
    </ligand>
</feature>
<feature type="binding site" evidence="1">
    <location>
        <position position="51"/>
    </location>
    <ligand>
        <name>ATP</name>
        <dbReference type="ChEBI" id="CHEBI:30616"/>
    </ligand>
</feature>
<feature type="binding site" evidence="1">
    <location>
        <begin position="87"/>
        <end position="91"/>
    </location>
    <ligand>
        <name>ATP</name>
        <dbReference type="ChEBI" id="CHEBI:30616"/>
    </ligand>
</feature>
<feature type="binding site" evidence="1">
    <location>
        <position position="415"/>
    </location>
    <ligand>
        <name>ATP</name>
        <dbReference type="ChEBI" id="CHEBI:30616"/>
    </ligand>
</feature>
<feature type="binding site" evidence="1">
    <location>
        <begin position="483"/>
        <end position="485"/>
    </location>
    <ligand>
        <name>ATP</name>
        <dbReference type="ChEBI" id="CHEBI:30616"/>
    </ligand>
</feature>
<feature type="binding site" evidence="1">
    <location>
        <position position="499"/>
    </location>
    <ligand>
        <name>ATP</name>
        <dbReference type="ChEBI" id="CHEBI:30616"/>
    </ligand>
</feature>
<proteinExistence type="inferred from homology"/>
<reference key="1">
    <citation type="journal article" date="1998" name="Nature">
        <title>The complete genome of the hyperthermophilic bacterium Aquifex aeolicus.</title>
        <authorList>
            <person name="Deckert G."/>
            <person name="Warren P.V."/>
            <person name="Gaasterland T."/>
            <person name="Young W.G."/>
            <person name="Lenox A.L."/>
            <person name="Graham D.E."/>
            <person name="Overbeek R."/>
            <person name="Snead M.A."/>
            <person name="Keller M."/>
            <person name="Aujay M."/>
            <person name="Huber R."/>
            <person name="Feldman R.A."/>
            <person name="Short J.M."/>
            <person name="Olsen G.J."/>
            <person name="Swanson R.V."/>
        </authorList>
    </citation>
    <scope>NUCLEOTIDE SEQUENCE [LARGE SCALE GENOMIC DNA]</scope>
    <source>
        <strain>VF5</strain>
    </source>
</reference>
<protein>
    <recommendedName>
        <fullName evidence="1">Chaperonin GroEL</fullName>
        <ecNumber evidence="1">5.6.1.7</ecNumber>
    </recommendedName>
    <alternativeName>
        <fullName evidence="1">60 kDa chaperonin</fullName>
    </alternativeName>
    <alternativeName>
        <fullName evidence="1">Chaperonin-60</fullName>
        <shortName evidence="1">Cpn60</shortName>
    </alternativeName>
</protein>